<protein>
    <recommendedName>
        <fullName evidence="5">MA3 DOMAIN-CONTAINING TRANSLATION REGULATORY FACTOR 4</fullName>
    </recommendedName>
    <alternativeName>
        <fullName evidence="4">MA3 domain-containing protein 7</fullName>
    </alternativeName>
</protein>
<keyword id="KW-0963">Cytoplasm</keyword>
<keyword id="KW-0539">Nucleus</keyword>
<keyword id="KW-1185">Reference proteome</keyword>
<keyword id="KW-0677">Repeat</keyword>
<keyword id="KW-0810">Translation regulation</keyword>
<name>MRF4_ARATH</name>
<evidence type="ECO:0000255" key="1">
    <source>
        <dbReference type="PROSITE-ProRule" id="PRU00698"/>
    </source>
</evidence>
<evidence type="ECO:0000255" key="2">
    <source>
        <dbReference type="PROSITE-ProRule" id="PRU00768"/>
    </source>
</evidence>
<evidence type="ECO:0000269" key="3">
    <source>
    </source>
</evidence>
<evidence type="ECO:0000303" key="4">
    <source>
    </source>
</evidence>
<evidence type="ECO:0000303" key="5">
    <source>
    </source>
</evidence>
<evidence type="ECO:0000305" key="6"/>
<evidence type="ECO:0000312" key="7">
    <source>
        <dbReference type="Araport" id="AT3G48390"/>
    </source>
</evidence>
<evidence type="ECO:0000312" key="8">
    <source>
        <dbReference type="EMBL" id="CAB41159.1"/>
    </source>
</evidence>
<organism>
    <name type="scientific">Arabidopsis thaliana</name>
    <name type="common">Mouse-ear cress</name>
    <dbReference type="NCBI Taxonomy" id="3702"/>
    <lineage>
        <taxon>Eukaryota</taxon>
        <taxon>Viridiplantae</taxon>
        <taxon>Streptophyta</taxon>
        <taxon>Embryophyta</taxon>
        <taxon>Tracheophyta</taxon>
        <taxon>Spermatophyta</taxon>
        <taxon>Magnoliopsida</taxon>
        <taxon>eudicotyledons</taxon>
        <taxon>Gunneridae</taxon>
        <taxon>Pentapetalae</taxon>
        <taxon>rosids</taxon>
        <taxon>malvids</taxon>
        <taxon>Brassicales</taxon>
        <taxon>Brassicaceae</taxon>
        <taxon>Camelineae</taxon>
        <taxon>Arabidopsis</taxon>
    </lineage>
</organism>
<dbReference type="EMBL" id="AL049659">
    <property type="protein sequence ID" value="CAB41159.1"/>
    <property type="molecule type" value="Genomic_DNA"/>
</dbReference>
<dbReference type="EMBL" id="CP002686">
    <property type="protein sequence ID" value="AEE78411.1"/>
    <property type="molecule type" value="Genomic_DNA"/>
</dbReference>
<dbReference type="EMBL" id="AY074567">
    <property type="protein sequence ID" value="AAL67107.1"/>
    <property type="molecule type" value="mRNA"/>
</dbReference>
<dbReference type="EMBL" id="BT002208">
    <property type="protein sequence ID" value="AAN72220.1"/>
    <property type="molecule type" value="mRNA"/>
</dbReference>
<dbReference type="PIR" id="T06703">
    <property type="entry name" value="T06703"/>
</dbReference>
<dbReference type="RefSeq" id="NP_190411.1">
    <property type="nucleotide sequence ID" value="NM_114699.5"/>
</dbReference>
<dbReference type="SMR" id="Q9STL9"/>
<dbReference type="FunCoup" id="Q9STL9">
    <property type="interactions" value="1718"/>
</dbReference>
<dbReference type="STRING" id="3702.Q9STL9"/>
<dbReference type="iPTMnet" id="Q9STL9"/>
<dbReference type="PaxDb" id="3702-AT3G48390.1"/>
<dbReference type="ProteomicsDB" id="189372"/>
<dbReference type="DNASU" id="823997"/>
<dbReference type="EnsemblPlants" id="AT3G48390.1">
    <property type="protein sequence ID" value="AT3G48390.1"/>
    <property type="gene ID" value="AT3G48390"/>
</dbReference>
<dbReference type="GeneID" id="823997"/>
<dbReference type="Gramene" id="AT3G48390.1">
    <property type="protein sequence ID" value="AT3G48390.1"/>
    <property type="gene ID" value="AT3G48390"/>
</dbReference>
<dbReference type="KEGG" id="ath:AT3G48390"/>
<dbReference type="Araport" id="AT3G48390"/>
<dbReference type="TAIR" id="AT3G48390">
    <property type="gene designation" value="MRF4"/>
</dbReference>
<dbReference type="eggNOG" id="KOG0403">
    <property type="taxonomic scope" value="Eukaryota"/>
</dbReference>
<dbReference type="HOGENOM" id="CLU_013764_1_0_1"/>
<dbReference type="InParanoid" id="Q9STL9"/>
<dbReference type="OMA" id="CHAIDSG"/>
<dbReference type="PhylomeDB" id="Q9STL9"/>
<dbReference type="PRO" id="PR:Q9STL9"/>
<dbReference type="Proteomes" id="UP000006548">
    <property type="component" value="Chromosome 3"/>
</dbReference>
<dbReference type="ExpressionAtlas" id="Q9STL9">
    <property type="expression patterns" value="baseline and differential"/>
</dbReference>
<dbReference type="GO" id="GO:0005829">
    <property type="term" value="C:cytosol"/>
    <property type="evidence" value="ECO:0000314"/>
    <property type="project" value="TAIR"/>
</dbReference>
<dbReference type="GO" id="GO:0005634">
    <property type="term" value="C:nucleus"/>
    <property type="evidence" value="ECO:0007669"/>
    <property type="project" value="UniProtKB-SubCell"/>
</dbReference>
<dbReference type="GO" id="GO:0043022">
    <property type="term" value="F:ribosome binding"/>
    <property type="evidence" value="ECO:0000314"/>
    <property type="project" value="UniProtKB"/>
</dbReference>
<dbReference type="GO" id="GO:0045892">
    <property type="term" value="P:negative regulation of DNA-templated transcription"/>
    <property type="evidence" value="ECO:0007669"/>
    <property type="project" value="InterPro"/>
</dbReference>
<dbReference type="GO" id="GO:0006417">
    <property type="term" value="P:regulation of translation"/>
    <property type="evidence" value="ECO:0007669"/>
    <property type="project" value="UniProtKB-KW"/>
</dbReference>
<dbReference type="GO" id="GO:0009646">
    <property type="term" value="P:response to absence of light"/>
    <property type="evidence" value="ECO:0000270"/>
    <property type="project" value="TAIR"/>
</dbReference>
<dbReference type="GO" id="GO:0090549">
    <property type="term" value="P:response to carbon starvation"/>
    <property type="evidence" value="ECO:0000270"/>
    <property type="project" value="TAIR"/>
</dbReference>
<dbReference type="FunFam" id="1.25.40.180:FF:000008">
    <property type="entry name" value="Programmed cell death protein 4"/>
    <property type="match status" value="2"/>
</dbReference>
<dbReference type="FunFam" id="1.25.40.180:FF:000009">
    <property type="entry name" value="programmed cell death protein 4"/>
    <property type="match status" value="2"/>
</dbReference>
<dbReference type="Gene3D" id="1.25.40.180">
    <property type="match status" value="4"/>
</dbReference>
<dbReference type="InterPro" id="IPR016024">
    <property type="entry name" value="ARM-type_fold"/>
</dbReference>
<dbReference type="InterPro" id="IPR003891">
    <property type="entry name" value="Initiation_fac_eIF4g_MI"/>
</dbReference>
<dbReference type="InterPro" id="IPR039778">
    <property type="entry name" value="PDCD4"/>
</dbReference>
<dbReference type="PANTHER" id="PTHR12626:SF12">
    <property type="entry name" value="MA3 DOMAIN-CONTAINING TRANSLATION REGULATORY FACTOR 4"/>
    <property type="match status" value="1"/>
</dbReference>
<dbReference type="PANTHER" id="PTHR12626">
    <property type="entry name" value="PROGRAMMED CELL DEATH 4"/>
    <property type="match status" value="1"/>
</dbReference>
<dbReference type="Pfam" id="PF02847">
    <property type="entry name" value="MA3"/>
    <property type="match status" value="4"/>
</dbReference>
<dbReference type="SMART" id="SM00544">
    <property type="entry name" value="MA3"/>
    <property type="match status" value="4"/>
</dbReference>
<dbReference type="SUPFAM" id="SSF48371">
    <property type="entry name" value="ARM repeat"/>
    <property type="match status" value="4"/>
</dbReference>
<dbReference type="PROSITE" id="PS51366">
    <property type="entry name" value="MI"/>
    <property type="match status" value="4"/>
</dbReference>
<proteinExistence type="evidence at protein level"/>
<comment type="function">
    <text evidence="3">Involved in target of rapamycin (TOR)-regulated translation control, especially under energy-deficient conditions.</text>
</comment>
<comment type="subunit">
    <text evidence="3">Binds to EIF4A1 (PubMed:29084871). The association with ribosomes is modulated by cellular energy status and TOR activity (PubMed:29084871).</text>
</comment>
<comment type="subcellular location">
    <subcellularLocation>
        <location evidence="2">Nucleus</location>
    </subcellularLocation>
    <subcellularLocation>
        <location evidence="3">Cytoplasm</location>
        <location evidence="3">Cytosol</location>
    </subcellularLocation>
</comment>
<comment type="tissue specificity">
    <text evidence="3">Mostly expressed, at low levels, in rosette leaves and flower buds, and, to a lower extent, in roots, stems, cauline leaves and flowers.</text>
</comment>
<comment type="induction">
    <text evidence="3">Induced by dark and starvation but repressed by glucose feeding subsequent to starvation in a TOR-dependent manner.</text>
</comment>
<comment type="disruption phenotype">
    <text evidence="3">Increased susceptibility to dark and starvation, and to treatment with the TOR inhibitor (PubMed:29084871). Decreased translation activity associated with altered ribosome patterns, especially in the dark and starvation conditions, in which mRNAs distribution is altered and rRNA abnormally degraded (PubMed:29084871). Slightly early flowering time under long-day conditions (PubMed:29084871).</text>
</comment>
<comment type="similarity">
    <text evidence="6">Belongs to the PDCD4 family.</text>
</comment>
<accession>Q9STL9</accession>
<accession>A0A178VI37</accession>
<reference key="1">
    <citation type="journal article" date="2000" name="Nature">
        <title>Sequence and analysis of chromosome 3 of the plant Arabidopsis thaliana.</title>
        <authorList>
            <person name="Salanoubat M."/>
            <person name="Lemcke K."/>
            <person name="Rieger M."/>
            <person name="Ansorge W."/>
            <person name="Unseld M."/>
            <person name="Fartmann B."/>
            <person name="Valle G."/>
            <person name="Bloecker H."/>
            <person name="Perez-Alonso M."/>
            <person name="Obermaier B."/>
            <person name="Delseny M."/>
            <person name="Boutry M."/>
            <person name="Grivell L.A."/>
            <person name="Mache R."/>
            <person name="Puigdomenech P."/>
            <person name="De Simone V."/>
            <person name="Choisne N."/>
            <person name="Artiguenave F."/>
            <person name="Robert C."/>
            <person name="Brottier P."/>
            <person name="Wincker P."/>
            <person name="Cattolico L."/>
            <person name="Weissenbach J."/>
            <person name="Saurin W."/>
            <person name="Quetier F."/>
            <person name="Schaefer M."/>
            <person name="Mueller-Auer S."/>
            <person name="Gabel C."/>
            <person name="Fuchs M."/>
            <person name="Benes V."/>
            <person name="Wurmbach E."/>
            <person name="Drzonek H."/>
            <person name="Erfle H."/>
            <person name="Jordan N."/>
            <person name="Bangert S."/>
            <person name="Wiedelmann R."/>
            <person name="Kranz H."/>
            <person name="Voss H."/>
            <person name="Holland R."/>
            <person name="Brandt P."/>
            <person name="Nyakatura G."/>
            <person name="Vezzi A."/>
            <person name="D'Angelo M."/>
            <person name="Pallavicini A."/>
            <person name="Toppo S."/>
            <person name="Simionati B."/>
            <person name="Conrad A."/>
            <person name="Hornischer K."/>
            <person name="Kauer G."/>
            <person name="Loehnert T.-H."/>
            <person name="Nordsiek G."/>
            <person name="Reichelt J."/>
            <person name="Scharfe M."/>
            <person name="Schoen O."/>
            <person name="Bargues M."/>
            <person name="Terol J."/>
            <person name="Climent J."/>
            <person name="Navarro P."/>
            <person name="Collado C."/>
            <person name="Perez-Perez A."/>
            <person name="Ottenwaelder B."/>
            <person name="Duchemin D."/>
            <person name="Cooke R."/>
            <person name="Laudie M."/>
            <person name="Berger-Llauro C."/>
            <person name="Purnelle B."/>
            <person name="Masuy D."/>
            <person name="de Haan M."/>
            <person name="Maarse A.C."/>
            <person name="Alcaraz J.-P."/>
            <person name="Cottet A."/>
            <person name="Casacuberta E."/>
            <person name="Monfort A."/>
            <person name="Argiriou A."/>
            <person name="Flores M."/>
            <person name="Liguori R."/>
            <person name="Vitale D."/>
            <person name="Mannhaupt G."/>
            <person name="Haase D."/>
            <person name="Schoof H."/>
            <person name="Rudd S."/>
            <person name="Zaccaria P."/>
            <person name="Mewes H.-W."/>
            <person name="Mayer K.F.X."/>
            <person name="Kaul S."/>
            <person name="Town C.D."/>
            <person name="Koo H.L."/>
            <person name="Tallon L.J."/>
            <person name="Jenkins J."/>
            <person name="Rooney T."/>
            <person name="Rizzo M."/>
            <person name="Walts A."/>
            <person name="Utterback T."/>
            <person name="Fujii C.Y."/>
            <person name="Shea T.P."/>
            <person name="Creasy T.H."/>
            <person name="Haas B."/>
            <person name="Maiti R."/>
            <person name="Wu D."/>
            <person name="Peterson J."/>
            <person name="Van Aken S."/>
            <person name="Pai G."/>
            <person name="Militscher J."/>
            <person name="Sellers P."/>
            <person name="Gill J.E."/>
            <person name="Feldblyum T.V."/>
            <person name="Preuss D."/>
            <person name="Lin X."/>
            <person name="Nierman W.C."/>
            <person name="Salzberg S.L."/>
            <person name="White O."/>
            <person name="Venter J.C."/>
            <person name="Fraser C.M."/>
            <person name="Kaneko T."/>
            <person name="Nakamura Y."/>
            <person name="Sato S."/>
            <person name="Kato T."/>
            <person name="Asamizu E."/>
            <person name="Sasamoto S."/>
            <person name="Kimura T."/>
            <person name="Idesawa K."/>
            <person name="Kawashima K."/>
            <person name="Kishida Y."/>
            <person name="Kiyokawa C."/>
            <person name="Kohara M."/>
            <person name="Matsumoto M."/>
            <person name="Matsuno A."/>
            <person name="Muraki A."/>
            <person name="Nakayama S."/>
            <person name="Nakazaki N."/>
            <person name="Shinpo S."/>
            <person name="Takeuchi C."/>
            <person name="Wada T."/>
            <person name="Watanabe A."/>
            <person name="Yamada M."/>
            <person name="Yasuda M."/>
            <person name="Tabata S."/>
        </authorList>
    </citation>
    <scope>NUCLEOTIDE SEQUENCE [LARGE SCALE GENOMIC DNA]</scope>
    <source>
        <strain>cv. Columbia</strain>
    </source>
</reference>
<reference key="2">
    <citation type="journal article" date="2017" name="Plant J.">
        <title>Araport11: a complete reannotation of the Arabidopsis thaliana reference genome.</title>
        <authorList>
            <person name="Cheng C.Y."/>
            <person name="Krishnakumar V."/>
            <person name="Chan A.P."/>
            <person name="Thibaud-Nissen F."/>
            <person name="Schobel S."/>
            <person name="Town C.D."/>
        </authorList>
    </citation>
    <scope>GENOME REANNOTATION</scope>
    <source>
        <strain>cv. Columbia</strain>
    </source>
</reference>
<reference key="3">
    <citation type="journal article" date="2003" name="Science">
        <title>Empirical analysis of transcriptional activity in the Arabidopsis genome.</title>
        <authorList>
            <person name="Yamada K."/>
            <person name="Lim J."/>
            <person name="Dale J.M."/>
            <person name="Chen H."/>
            <person name="Shinn P."/>
            <person name="Palm C.J."/>
            <person name="Southwick A.M."/>
            <person name="Wu H.C."/>
            <person name="Kim C.J."/>
            <person name="Nguyen M."/>
            <person name="Pham P.K."/>
            <person name="Cheuk R.F."/>
            <person name="Karlin-Newmann G."/>
            <person name="Liu S.X."/>
            <person name="Lam B."/>
            <person name="Sakano H."/>
            <person name="Wu T."/>
            <person name="Yu G."/>
            <person name="Miranda M."/>
            <person name="Quach H.L."/>
            <person name="Tripp M."/>
            <person name="Chang C.H."/>
            <person name="Lee J.M."/>
            <person name="Toriumi M.J."/>
            <person name="Chan M.M."/>
            <person name="Tang C.C."/>
            <person name="Onodera C.S."/>
            <person name="Deng J.M."/>
            <person name="Akiyama K."/>
            <person name="Ansari Y."/>
            <person name="Arakawa T."/>
            <person name="Banh J."/>
            <person name="Banno F."/>
            <person name="Bowser L."/>
            <person name="Brooks S.Y."/>
            <person name="Carninci P."/>
            <person name="Chao Q."/>
            <person name="Choy N."/>
            <person name="Enju A."/>
            <person name="Goldsmith A.D."/>
            <person name="Gurjal M."/>
            <person name="Hansen N.F."/>
            <person name="Hayashizaki Y."/>
            <person name="Johnson-Hopson C."/>
            <person name="Hsuan V.W."/>
            <person name="Iida K."/>
            <person name="Karnes M."/>
            <person name="Khan S."/>
            <person name="Koesema E."/>
            <person name="Ishida J."/>
            <person name="Jiang P.X."/>
            <person name="Jones T."/>
            <person name="Kawai J."/>
            <person name="Kamiya A."/>
            <person name="Meyers C."/>
            <person name="Nakajima M."/>
            <person name="Narusaka M."/>
            <person name="Seki M."/>
            <person name="Sakurai T."/>
            <person name="Satou M."/>
            <person name="Tamse R."/>
            <person name="Vaysberg M."/>
            <person name="Wallender E.K."/>
            <person name="Wong C."/>
            <person name="Yamamura Y."/>
            <person name="Yuan S."/>
            <person name="Shinozaki K."/>
            <person name="Davis R.W."/>
            <person name="Theologis A."/>
            <person name="Ecker J.R."/>
        </authorList>
    </citation>
    <scope>NUCLEOTIDE SEQUENCE [LARGE SCALE MRNA]</scope>
    <source>
        <strain>cv. Columbia</strain>
    </source>
</reference>
<reference key="4">
    <citation type="journal article" date="2013" name="BMC Evol. Biol.">
        <title>The unique evolution of the programmed cell death 4 protein in plants.</title>
        <authorList>
            <person name="Cheng S."/>
            <person name="Liu R."/>
            <person name="Gallie D.R."/>
        </authorList>
    </citation>
    <scope>GENE FAMILY</scope>
</reference>
<reference key="5">
    <citation type="journal article" date="2017" name="Plant Cell">
        <title>MRF family genes are involved in translation control, especially under energy-deficient conditions, and their expression and functions are modulated by the TOR signaling pathway.</title>
        <authorList>
            <person name="Lee D.-H."/>
            <person name="Park S.J."/>
            <person name="Ahn C.S."/>
            <person name="Pai H.-S."/>
        </authorList>
    </citation>
    <scope>FUNCTION</scope>
    <scope>DISRUPTION PHENOTYPE</scope>
    <scope>INDUCTION BY DARK AND STARVATION</scope>
    <scope>TISSUE SPECIFICITY</scope>
    <scope>INTERACTION WITH EIF4A1 AND RIBOSOMES</scope>
    <scope>SUBCELLULAR LOCATION</scope>
    <scope>GENE FAMILY</scope>
    <scope>NOMENCLATURE</scope>
    <source>
        <strain>cv. Columbia</strain>
    </source>
</reference>
<sequence>MATREWFVMNAQQTKLALESPPLFAVKKDDDKDHTCDTGEEPYALVGSPVFNPLEDYKREVVSIIDEYFSSGDVEVAASDLMDLGLSEYHPYFVKRLVSMAMDRGNKEKEKASVLLSRLYALVVSPDQIRVGFIRLLESVGDLALDIPDAVNVLALFIARAIVDEILPPVFLARAKKTLPHSSQGFQVILVSENSYLSAPHHAELVETKWGGSTHITVEETKRKISEFLNEYVENGDTREACRCIRELGVSFFHHEIVKSGLVLVMESRTSEPLILKLLKEATEEGLISSSQMAKGFSRVADSLDDLSLDIPSAKTLFESIVPKAIIGGWLDEDSFKERSDQNGGSENLRRFKKDAETIIQEYFLSDDIPELIRSLEDLGLPEYNPVFLKKLITLAMDRKNKEKEMASVFLASLHMEMFSTEDFINGFIMLLESAEDTALDILAASDELALFLARAVIDDVLAPLNLEEISNSLPPKSTGSETIRSARSLISARHAGERLLRSWGGGTGWAVEDAKDKIWKLLEEYEVGGVISEACRCIRDLGMPFFNHEVVKKALVMAMEKKNDRMLNLLQECFAEGIITTNQMTKGFGRVKDSLDDLSLDIPNAEEKFNSYVAHAEENGWLHRDFGCSTDS</sequence>
<feature type="chain" id="PRO_0000447577" description="MA3 DOMAIN-CONTAINING TRANSLATION REGULATORY FACTOR 4">
    <location>
        <begin position="1"/>
        <end position="633"/>
    </location>
</feature>
<feature type="domain" description="MI 1" evidence="1">
    <location>
        <begin position="56"/>
        <end position="177"/>
    </location>
</feature>
<feature type="domain" description="MI 2" evidence="1">
    <location>
        <begin position="220"/>
        <end position="341"/>
    </location>
</feature>
<feature type="domain" description="MI 3" evidence="1">
    <location>
        <begin position="351"/>
        <end position="472"/>
    </location>
</feature>
<feature type="domain" description="MI 4" evidence="1">
    <location>
        <begin position="514"/>
        <end position="633"/>
    </location>
</feature>
<feature type="short sequence motif" description="Nuclear localization signal 1" evidence="2">
    <location>
        <begin position="94"/>
        <end position="101"/>
    </location>
</feature>
<feature type="short sequence motif" description="Nuclear localization signal 2" evidence="2">
    <location>
        <begin position="389"/>
        <end position="396"/>
    </location>
</feature>
<gene>
    <name evidence="5" type="primary">MRF4</name>
    <name evidence="4" type="synonym">MAT7</name>
    <name evidence="7" type="ordered locus">At3g48390</name>
    <name evidence="8" type="ORF">T29H11_90</name>
</gene>